<gene>
    <name evidence="1" type="primary">pdxJ</name>
    <name type="ordered locus">RD1_1362</name>
</gene>
<proteinExistence type="inferred from homology"/>
<dbReference type="EC" id="2.6.99.2" evidence="1"/>
<dbReference type="EMBL" id="CP000362">
    <property type="protein sequence ID" value="ABG31003.1"/>
    <property type="molecule type" value="Genomic_DNA"/>
</dbReference>
<dbReference type="RefSeq" id="WP_011567623.1">
    <property type="nucleotide sequence ID" value="NC_008209.1"/>
</dbReference>
<dbReference type="SMR" id="Q16AJ0"/>
<dbReference type="STRING" id="375451.RD1_1362"/>
<dbReference type="KEGG" id="rde:RD1_1362"/>
<dbReference type="eggNOG" id="COG0854">
    <property type="taxonomic scope" value="Bacteria"/>
</dbReference>
<dbReference type="HOGENOM" id="CLU_074563_0_0_5"/>
<dbReference type="OrthoDB" id="9806590at2"/>
<dbReference type="UniPathway" id="UPA00244">
    <property type="reaction ID" value="UER00313"/>
</dbReference>
<dbReference type="Proteomes" id="UP000007029">
    <property type="component" value="Chromosome"/>
</dbReference>
<dbReference type="GO" id="GO:0005829">
    <property type="term" value="C:cytosol"/>
    <property type="evidence" value="ECO:0007669"/>
    <property type="project" value="TreeGrafter"/>
</dbReference>
<dbReference type="GO" id="GO:0033856">
    <property type="term" value="F:pyridoxine 5'-phosphate synthase activity"/>
    <property type="evidence" value="ECO:0007669"/>
    <property type="project" value="UniProtKB-EC"/>
</dbReference>
<dbReference type="GO" id="GO:0008615">
    <property type="term" value="P:pyridoxine biosynthetic process"/>
    <property type="evidence" value="ECO:0007669"/>
    <property type="project" value="UniProtKB-UniRule"/>
</dbReference>
<dbReference type="CDD" id="cd00003">
    <property type="entry name" value="PNPsynthase"/>
    <property type="match status" value="1"/>
</dbReference>
<dbReference type="Gene3D" id="3.20.20.70">
    <property type="entry name" value="Aldolase class I"/>
    <property type="match status" value="1"/>
</dbReference>
<dbReference type="HAMAP" id="MF_00279">
    <property type="entry name" value="PdxJ"/>
    <property type="match status" value="1"/>
</dbReference>
<dbReference type="InterPro" id="IPR013785">
    <property type="entry name" value="Aldolase_TIM"/>
</dbReference>
<dbReference type="InterPro" id="IPR004569">
    <property type="entry name" value="PyrdxlP_synth_PdxJ"/>
</dbReference>
<dbReference type="InterPro" id="IPR036130">
    <property type="entry name" value="Pyridoxine-5'_phos_synth"/>
</dbReference>
<dbReference type="NCBIfam" id="TIGR00559">
    <property type="entry name" value="pdxJ"/>
    <property type="match status" value="1"/>
</dbReference>
<dbReference type="NCBIfam" id="NF003624">
    <property type="entry name" value="PRK05265.1-2"/>
    <property type="match status" value="1"/>
</dbReference>
<dbReference type="NCBIfam" id="NF003625">
    <property type="entry name" value="PRK05265.1-3"/>
    <property type="match status" value="1"/>
</dbReference>
<dbReference type="NCBIfam" id="NF003627">
    <property type="entry name" value="PRK05265.1-5"/>
    <property type="match status" value="1"/>
</dbReference>
<dbReference type="PANTHER" id="PTHR30456">
    <property type="entry name" value="PYRIDOXINE 5'-PHOSPHATE SYNTHASE"/>
    <property type="match status" value="1"/>
</dbReference>
<dbReference type="PANTHER" id="PTHR30456:SF0">
    <property type="entry name" value="PYRIDOXINE 5'-PHOSPHATE SYNTHASE"/>
    <property type="match status" value="1"/>
</dbReference>
<dbReference type="Pfam" id="PF03740">
    <property type="entry name" value="PdxJ"/>
    <property type="match status" value="1"/>
</dbReference>
<dbReference type="SUPFAM" id="SSF63892">
    <property type="entry name" value="Pyridoxine 5'-phosphate synthase"/>
    <property type="match status" value="1"/>
</dbReference>
<comment type="function">
    <text evidence="1">Catalyzes the complicated ring closure reaction between the two acyclic compounds 1-deoxy-D-xylulose-5-phosphate (DXP) and 3-amino-2-oxopropyl phosphate (1-amino-acetone-3-phosphate or AAP) to form pyridoxine 5'-phosphate (PNP) and inorganic phosphate.</text>
</comment>
<comment type="catalytic activity">
    <reaction evidence="1">
        <text>3-amino-2-oxopropyl phosphate + 1-deoxy-D-xylulose 5-phosphate = pyridoxine 5'-phosphate + phosphate + 2 H2O + H(+)</text>
        <dbReference type="Rhea" id="RHEA:15265"/>
        <dbReference type="ChEBI" id="CHEBI:15377"/>
        <dbReference type="ChEBI" id="CHEBI:15378"/>
        <dbReference type="ChEBI" id="CHEBI:43474"/>
        <dbReference type="ChEBI" id="CHEBI:57279"/>
        <dbReference type="ChEBI" id="CHEBI:57792"/>
        <dbReference type="ChEBI" id="CHEBI:58589"/>
        <dbReference type="EC" id="2.6.99.2"/>
    </reaction>
</comment>
<comment type="pathway">
    <text evidence="1">Cofactor biosynthesis; pyridoxine 5'-phosphate biosynthesis; pyridoxine 5'-phosphate from D-erythrose 4-phosphate: step 5/5.</text>
</comment>
<comment type="subunit">
    <text evidence="1">Homooctamer; tetramer of dimers.</text>
</comment>
<comment type="subcellular location">
    <subcellularLocation>
        <location evidence="1">Cytoplasm</location>
    </subcellularLocation>
</comment>
<comment type="similarity">
    <text evidence="1">Belongs to the PNP synthase family.</text>
</comment>
<accession>Q16AJ0</accession>
<feature type="chain" id="PRO_1000022402" description="Pyridoxine 5'-phosphate synthase">
    <location>
        <begin position="1"/>
        <end position="249"/>
    </location>
</feature>
<feature type="active site" description="Proton acceptor" evidence="1">
    <location>
        <position position="48"/>
    </location>
</feature>
<feature type="active site" description="Proton acceptor" evidence="1">
    <location>
        <position position="75"/>
    </location>
</feature>
<feature type="active site" description="Proton donor" evidence="1">
    <location>
        <position position="199"/>
    </location>
</feature>
<feature type="binding site" evidence="1">
    <location>
        <position position="12"/>
    </location>
    <ligand>
        <name>3-amino-2-oxopropyl phosphate</name>
        <dbReference type="ChEBI" id="CHEBI:57279"/>
    </ligand>
</feature>
<feature type="binding site" evidence="1">
    <location>
        <begin position="14"/>
        <end position="15"/>
    </location>
    <ligand>
        <name>1-deoxy-D-xylulose 5-phosphate</name>
        <dbReference type="ChEBI" id="CHEBI:57792"/>
    </ligand>
</feature>
<feature type="binding site" evidence="1">
    <location>
        <position position="23"/>
    </location>
    <ligand>
        <name>3-amino-2-oxopropyl phosphate</name>
        <dbReference type="ChEBI" id="CHEBI:57279"/>
    </ligand>
</feature>
<feature type="binding site" evidence="1">
    <location>
        <position position="50"/>
    </location>
    <ligand>
        <name>1-deoxy-D-xylulose 5-phosphate</name>
        <dbReference type="ChEBI" id="CHEBI:57792"/>
    </ligand>
</feature>
<feature type="binding site" evidence="1">
    <location>
        <position position="55"/>
    </location>
    <ligand>
        <name>1-deoxy-D-xylulose 5-phosphate</name>
        <dbReference type="ChEBI" id="CHEBI:57792"/>
    </ligand>
</feature>
<feature type="binding site" evidence="1">
    <location>
        <position position="105"/>
    </location>
    <ligand>
        <name>1-deoxy-D-xylulose 5-phosphate</name>
        <dbReference type="ChEBI" id="CHEBI:57792"/>
    </ligand>
</feature>
<feature type="binding site" evidence="1">
    <location>
        <position position="200"/>
    </location>
    <ligand>
        <name>3-amino-2-oxopropyl phosphate</name>
        <dbReference type="ChEBI" id="CHEBI:57279"/>
    </ligand>
</feature>
<feature type="binding site" evidence="1">
    <location>
        <begin position="221"/>
        <end position="222"/>
    </location>
    <ligand>
        <name>3-amino-2-oxopropyl phosphate</name>
        <dbReference type="ChEBI" id="CHEBI:57279"/>
    </ligand>
</feature>
<feature type="site" description="Transition state stabilizer" evidence="1">
    <location>
        <position position="156"/>
    </location>
</feature>
<evidence type="ECO:0000255" key="1">
    <source>
        <dbReference type="HAMAP-Rule" id="MF_00279"/>
    </source>
</evidence>
<reference key="1">
    <citation type="journal article" date="2007" name="J. Bacteriol.">
        <title>The complete genome sequence of Roseobacter denitrificans reveals a mixotrophic rather than photosynthetic metabolism.</title>
        <authorList>
            <person name="Swingley W.D."/>
            <person name="Sadekar S."/>
            <person name="Mastrian S.D."/>
            <person name="Matthies H.J."/>
            <person name="Hao J."/>
            <person name="Ramos H."/>
            <person name="Acharya C.R."/>
            <person name="Conrad A.L."/>
            <person name="Taylor H.L."/>
            <person name="Dejesa L.C."/>
            <person name="Shah M.K."/>
            <person name="O'Huallachain M.E."/>
            <person name="Lince M.T."/>
            <person name="Blankenship R.E."/>
            <person name="Beatty J.T."/>
            <person name="Touchman J.W."/>
        </authorList>
    </citation>
    <scope>NUCLEOTIDE SEQUENCE [LARGE SCALE GENOMIC DNA]</scope>
    <source>
        <strain>ATCC 33942 / OCh 114</strain>
    </source>
</reference>
<sequence length="249" mass="27341">MSDQKKLRLGVNIDHVATVRNARGGAYPDPLRAARIAEEAGADGITAHLREDRRHISDADIEGLMDVLSVPLNFEMAATDEMQQIALRHKPHAVCIVPEKREERTTEGGLEVAREENVLAHFIAPLREAGCRVSIFIAAEQRQIEAAHRIGAEVIELHTGAYCDAHAEGDFAQRDAELARLRDMATFAHGLGLEVHAGHGLTYDTVQPIAAFPEVIELNIGHFLIGESIFRGLEPAIAEMRRLMDAARA</sequence>
<keyword id="KW-0963">Cytoplasm</keyword>
<keyword id="KW-0664">Pyridoxine biosynthesis</keyword>
<keyword id="KW-1185">Reference proteome</keyword>
<keyword id="KW-0808">Transferase</keyword>
<name>PDXJ_ROSDO</name>
<organism>
    <name type="scientific">Roseobacter denitrificans (strain ATCC 33942 / OCh 114)</name>
    <name type="common">Erythrobacter sp. (strain OCh 114)</name>
    <name type="synonym">Roseobacter denitrificans</name>
    <dbReference type="NCBI Taxonomy" id="375451"/>
    <lineage>
        <taxon>Bacteria</taxon>
        <taxon>Pseudomonadati</taxon>
        <taxon>Pseudomonadota</taxon>
        <taxon>Alphaproteobacteria</taxon>
        <taxon>Rhodobacterales</taxon>
        <taxon>Roseobacteraceae</taxon>
        <taxon>Roseobacter</taxon>
    </lineage>
</organism>
<protein>
    <recommendedName>
        <fullName evidence="1">Pyridoxine 5'-phosphate synthase</fullName>
        <shortName evidence="1">PNP synthase</shortName>
        <ecNumber evidence="1">2.6.99.2</ecNumber>
    </recommendedName>
</protein>